<reference key="1">
    <citation type="journal article" date="2004" name="Genome Res.">
        <title>The status, quality, and expansion of the NIH full-length cDNA project: the Mammalian Gene Collection (MGC).</title>
        <authorList>
            <consortium name="The MGC Project Team"/>
        </authorList>
    </citation>
    <scope>NUCLEOTIDE SEQUENCE [LARGE SCALE MRNA]</scope>
    <source>
        <tissue>Liver</tissue>
    </source>
</reference>
<accession>Q0D2L3</accession>
<accession>Q5BK25</accession>
<organism>
    <name type="scientific">Rattus norvegicus</name>
    <name type="common">Rat</name>
    <dbReference type="NCBI Taxonomy" id="10116"/>
    <lineage>
        <taxon>Eukaryota</taxon>
        <taxon>Metazoa</taxon>
        <taxon>Chordata</taxon>
        <taxon>Craniata</taxon>
        <taxon>Vertebrata</taxon>
        <taxon>Euteleostomi</taxon>
        <taxon>Mammalia</taxon>
        <taxon>Eutheria</taxon>
        <taxon>Euarchontoglires</taxon>
        <taxon>Glires</taxon>
        <taxon>Rodentia</taxon>
        <taxon>Myomorpha</taxon>
        <taxon>Muroidea</taxon>
        <taxon>Muridae</taxon>
        <taxon>Murinae</taxon>
        <taxon>Rattus</taxon>
    </lineage>
</organism>
<protein>
    <recommendedName>
        <fullName evidence="2">Guanidino acid hydrolase, mitochondrial</fullName>
        <ecNumber evidence="2">3.5.3.-</ecNumber>
    </recommendedName>
    <alternativeName>
        <fullName evidence="2">Arginase, mitochondrial</fullName>
        <ecNumber evidence="2">3.5.3.1</ecNumber>
    </alternativeName>
    <alternativeName>
        <fullName>Guanidinobutyrase, mitochondrial</fullName>
        <ecNumber evidence="2">3.5.3.7</ecNumber>
    </alternativeName>
    <alternativeName>
        <fullName>Guanidinopropionase, mitochondrial</fullName>
        <ecNumber evidence="2">3.5.3.17</ecNumber>
    </alternativeName>
</protein>
<keyword id="KW-0007">Acetylation</keyword>
<keyword id="KW-0056">Arginine metabolism</keyword>
<keyword id="KW-0378">Hydrolase</keyword>
<keyword id="KW-0464">Manganese</keyword>
<keyword id="KW-0479">Metal-binding</keyword>
<keyword id="KW-0496">Mitochondrion</keyword>
<keyword id="KW-1185">Reference proteome</keyword>
<keyword id="KW-0809">Transit peptide</keyword>
<name>GDAH_RAT</name>
<dbReference type="EC" id="3.5.3.-" evidence="2"/>
<dbReference type="EC" id="3.5.3.1" evidence="2"/>
<dbReference type="EC" id="3.5.3.7" evidence="2"/>
<dbReference type="EC" id="3.5.3.17" evidence="2"/>
<dbReference type="EMBL" id="BC091231">
    <property type="protein sequence ID" value="AAH91231.1"/>
    <property type="molecule type" value="mRNA"/>
</dbReference>
<dbReference type="EMBL" id="BC105628">
    <property type="protein sequence ID" value="AAI05629.1"/>
    <property type="molecule type" value="mRNA"/>
</dbReference>
<dbReference type="RefSeq" id="NP_001041650.1">
    <property type="nucleotide sequence ID" value="NM_001048185.1"/>
</dbReference>
<dbReference type="SMR" id="Q0D2L3"/>
<dbReference type="FunCoup" id="Q0D2L3">
    <property type="interactions" value="71"/>
</dbReference>
<dbReference type="IntAct" id="Q0D2L3">
    <property type="interactions" value="1"/>
</dbReference>
<dbReference type="STRING" id="10116.ENSRNOP00000016646"/>
<dbReference type="iPTMnet" id="Q0D2L3"/>
<dbReference type="PhosphoSitePlus" id="Q0D2L3"/>
<dbReference type="PaxDb" id="10116-ENSRNOP00000016646"/>
<dbReference type="Ensembl" id="ENSRNOT00000016648.6">
    <property type="protein sequence ID" value="ENSRNOP00000016646.3"/>
    <property type="gene ID" value="ENSRNOG00000012315.6"/>
</dbReference>
<dbReference type="GeneID" id="298607"/>
<dbReference type="KEGG" id="rno:298607"/>
<dbReference type="UCSC" id="RGD:1308424">
    <property type="organism name" value="rat"/>
</dbReference>
<dbReference type="AGR" id="RGD:1308424"/>
<dbReference type="CTD" id="79814"/>
<dbReference type="RGD" id="1308424">
    <property type="gene designation" value="Agmat"/>
</dbReference>
<dbReference type="eggNOG" id="KOG2964">
    <property type="taxonomic scope" value="Eukaryota"/>
</dbReference>
<dbReference type="GeneTree" id="ENSGT00950000183195"/>
<dbReference type="HOGENOM" id="CLU_039478_0_0_1"/>
<dbReference type="InParanoid" id="Q0D2L3"/>
<dbReference type="OMA" id="YELTTIM"/>
<dbReference type="OrthoDB" id="9492at9989"/>
<dbReference type="PhylomeDB" id="Q0D2L3"/>
<dbReference type="TreeFam" id="TF328612"/>
<dbReference type="Reactome" id="R-RNO-351143">
    <property type="pathway name" value="Agmatine biosynthesis"/>
</dbReference>
<dbReference type="UniPathway" id="UPA00158">
    <property type="reaction ID" value="UER00270"/>
</dbReference>
<dbReference type="PRO" id="PR:Q0D2L3"/>
<dbReference type="Proteomes" id="UP000002494">
    <property type="component" value="Chromosome 5"/>
</dbReference>
<dbReference type="Bgee" id="ENSRNOG00000012315">
    <property type="expression patterns" value="Expressed in kidney and 16 other cell types or tissues"/>
</dbReference>
<dbReference type="GO" id="GO:0005739">
    <property type="term" value="C:mitochondrion"/>
    <property type="evidence" value="ECO:0007669"/>
    <property type="project" value="UniProtKB-SubCell"/>
</dbReference>
<dbReference type="GO" id="GO:0008783">
    <property type="term" value="F:agmatinase activity"/>
    <property type="evidence" value="ECO:0000318"/>
    <property type="project" value="GO_Central"/>
</dbReference>
<dbReference type="GO" id="GO:0004053">
    <property type="term" value="F:arginase activity"/>
    <property type="evidence" value="ECO:0000250"/>
    <property type="project" value="UniProtKB"/>
</dbReference>
<dbReference type="GO" id="GO:0047971">
    <property type="term" value="F:guanidinobutyrase activity"/>
    <property type="evidence" value="ECO:0000250"/>
    <property type="project" value="UniProtKB"/>
</dbReference>
<dbReference type="GO" id="GO:0047972">
    <property type="term" value="F:guanidinopropionase activity"/>
    <property type="evidence" value="ECO:0000250"/>
    <property type="project" value="UniProtKB"/>
</dbReference>
<dbReference type="GO" id="GO:0046872">
    <property type="term" value="F:metal ion binding"/>
    <property type="evidence" value="ECO:0007669"/>
    <property type="project" value="UniProtKB-KW"/>
</dbReference>
<dbReference type="GO" id="GO:0033389">
    <property type="term" value="P:putrescine biosynthetic process from arginine, via agmatine"/>
    <property type="evidence" value="ECO:0000318"/>
    <property type="project" value="GO_Central"/>
</dbReference>
<dbReference type="GO" id="GO:0000050">
    <property type="term" value="P:urea cycle"/>
    <property type="evidence" value="ECO:0007669"/>
    <property type="project" value="UniProtKB-UniPathway"/>
</dbReference>
<dbReference type="CDD" id="cd11592">
    <property type="entry name" value="Agmatinase_PAH"/>
    <property type="match status" value="1"/>
</dbReference>
<dbReference type="FunFam" id="3.40.800.10:FF:000002">
    <property type="entry name" value="Agmatinase"/>
    <property type="match status" value="1"/>
</dbReference>
<dbReference type="Gene3D" id="3.40.800.10">
    <property type="entry name" value="Ureohydrolase domain"/>
    <property type="match status" value="1"/>
</dbReference>
<dbReference type="InterPro" id="IPR005925">
    <property type="entry name" value="Agmatinase-rel"/>
</dbReference>
<dbReference type="InterPro" id="IPR006035">
    <property type="entry name" value="Ureohydrolase"/>
</dbReference>
<dbReference type="InterPro" id="IPR023696">
    <property type="entry name" value="Ureohydrolase_dom_sf"/>
</dbReference>
<dbReference type="NCBIfam" id="TIGR01230">
    <property type="entry name" value="agmatinase"/>
    <property type="match status" value="1"/>
</dbReference>
<dbReference type="PANTHER" id="PTHR11358">
    <property type="entry name" value="ARGINASE/AGMATINASE"/>
    <property type="match status" value="1"/>
</dbReference>
<dbReference type="PANTHER" id="PTHR11358:SF26">
    <property type="entry name" value="GUANIDINO ACID HYDROLASE, MITOCHONDRIAL"/>
    <property type="match status" value="1"/>
</dbReference>
<dbReference type="Pfam" id="PF00491">
    <property type="entry name" value="Arginase"/>
    <property type="match status" value="1"/>
</dbReference>
<dbReference type="PIRSF" id="PIRSF036979">
    <property type="entry name" value="Arginase"/>
    <property type="match status" value="1"/>
</dbReference>
<dbReference type="PRINTS" id="PR00116">
    <property type="entry name" value="ARGINASE"/>
</dbReference>
<dbReference type="SUPFAM" id="SSF52768">
    <property type="entry name" value="Arginase/deacetylase"/>
    <property type="match status" value="1"/>
</dbReference>
<dbReference type="PROSITE" id="PS51409">
    <property type="entry name" value="ARGINASE_2"/>
    <property type="match status" value="1"/>
</dbReference>
<sequence>MLQLLKSSWVRSAGSGVVTWRASAGLFCPGTRQASDTSDTLHHPSPSSESQVQPVRVCSMMHLPLQSSPEGLDAAFVGVPLDTGTSNRPGARFGPRRIREESLMLGTVNPSTGALPFQSLRVADLGNVNVNLYNLQDSCRLIREAYQNILATGCIPLTLGGDHTITYPILQAVAKEHGPVGLVHVGAHSNTSDKPLEDKVYHRTPFRRSVDEGLLDSKRVVQIGIRGSSRTLDPYRYSRSQGFRVVLAEDCWMKSLVPLMAEIRQQMGGVPLYISFAIDALDPAYAPGTGTPEIAGLTPSQALEIIRGCQGLNVVGCDLVEVSPPYDLSGNTALLAANLLFEMLCALPKVTTV</sequence>
<proteinExistence type="evidence at transcript level"/>
<evidence type="ECO:0000250" key="1">
    <source>
        <dbReference type="UniProtKB" id="A2AS89"/>
    </source>
</evidence>
<evidence type="ECO:0000250" key="2">
    <source>
        <dbReference type="UniProtKB" id="Q9BSE5"/>
    </source>
</evidence>
<evidence type="ECO:0000255" key="3"/>
<evidence type="ECO:0000255" key="4">
    <source>
        <dbReference type="PROSITE-ProRule" id="PRU00742"/>
    </source>
</evidence>
<evidence type="ECO:0000256" key="5">
    <source>
        <dbReference type="SAM" id="MobiDB-lite"/>
    </source>
</evidence>
<evidence type="ECO:0000305" key="6"/>
<comment type="function">
    <text evidence="2">Hydrolyzes linear guanidino acids to form urea and the corresponding amines. Displays specificity for substrates having a negatively charged head group and short chains including taurocyamine, guanidino propanoic and butanoic acids. May protect cells by detoxifying potentially harmful amounts of guanidino acids. Metabolizes L-arginine with low efficiency.</text>
</comment>
<comment type="catalytic activity">
    <reaction evidence="2">
        <text>3-guanidinopropanoate + H2O = urea + beta-alanine</text>
        <dbReference type="Rhea" id="RHEA:16029"/>
        <dbReference type="ChEBI" id="CHEBI:15377"/>
        <dbReference type="ChEBI" id="CHEBI:16199"/>
        <dbReference type="ChEBI" id="CHEBI:57593"/>
        <dbReference type="ChEBI" id="CHEBI:57966"/>
        <dbReference type="EC" id="3.5.3.17"/>
    </reaction>
    <physiologicalReaction direction="left-to-right" evidence="2">
        <dbReference type="Rhea" id="RHEA:16030"/>
    </physiologicalReaction>
</comment>
<comment type="catalytic activity">
    <reaction evidence="2">
        <text>4-guanidinobutanoate + H2O = urea + 4-aminobutanoate</text>
        <dbReference type="Rhea" id="RHEA:19501"/>
        <dbReference type="ChEBI" id="CHEBI:15377"/>
        <dbReference type="ChEBI" id="CHEBI:16199"/>
        <dbReference type="ChEBI" id="CHEBI:57486"/>
        <dbReference type="ChEBI" id="CHEBI:59888"/>
        <dbReference type="EC" id="3.5.3.7"/>
    </reaction>
    <physiologicalReaction direction="left-to-right" evidence="2">
        <dbReference type="Rhea" id="RHEA:19502"/>
    </physiologicalReaction>
</comment>
<comment type="catalytic activity">
    <reaction evidence="2">
        <text>taurocyamine + H2O = urea + taurine</text>
        <dbReference type="Rhea" id="RHEA:75931"/>
        <dbReference type="ChEBI" id="CHEBI:15377"/>
        <dbReference type="ChEBI" id="CHEBI:16199"/>
        <dbReference type="ChEBI" id="CHEBI:58064"/>
        <dbReference type="ChEBI" id="CHEBI:507393"/>
        <dbReference type="EC" id="3.5.3.17"/>
    </reaction>
    <physiologicalReaction direction="left-to-right" evidence="2">
        <dbReference type="Rhea" id="RHEA:75932"/>
    </physiologicalReaction>
</comment>
<comment type="catalytic activity">
    <reaction evidence="2">
        <text>L-arginine + H2O = urea + L-ornithine</text>
        <dbReference type="Rhea" id="RHEA:20569"/>
        <dbReference type="ChEBI" id="CHEBI:15377"/>
        <dbReference type="ChEBI" id="CHEBI:16199"/>
        <dbReference type="ChEBI" id="CHEBI:32682"/>
        <dbReference type="ChEBI" id="CHEBI:46911"/>
        <dbReference type="EC" id="3.5.3.1"/>
    </reaction>
    <physiologicalReaction direction="left-to-right" evidence="2">
        <dbReference type="Rhea" id="RHEA:20570"/>
    </physiologicalReaction>
</comment>
<comment type="cofactor">
    <cofactor evidence="4">
        <name>Mn(2+)</name>
        <dbReference type="ChEBI" id="CHEBI:29035"/>
    </cofactor>
</comment>
<comment type="pathway">
    <text evidence="2">Nitrogen metabolism; urea cycle; L-ornithine and urea from L-arginine: step 1/1.</text>
</comment>
<comment type="subcellular location">
    <subcellularLocation>
        <location evidence="3">Mitochondrion</location>
    </subcellularLocation>
</comment>
<comment type="similarity">
    <text evidence="4">Belongs to the arginase family. Agmatinase subfamily.</text>
</comment>
<comment type="caution">
    <text evidence="6">May have little or no activity due to the lack of several residues essential for manganese binding and catalytic activity.</text>
</comment>
<feature type="transit peptide" description="Mitochondrion" evidence="3">
    <location>
        <begin position="1"/>
        <end position="33"/>
    </location>
</feature>
<feature type="chain" id="PRO_0000320073" description="Guanidino acid hydrolase, mitochondrial">
    <location>
        <begin position="34"/>
        <end position="353"/>
    </location>
</feature>
<feature type="region of interest" description="Disordered" evidence="5">
    <location>
        <begin position="29"/>
        <end position="52"/>
    </location>
</feature>
<feature type="binding site" evidence="4">
    <location>
        <position position="163"/>
    </location>
    <ligand>
        <name>Mn(2+)</name>
        <dbReference type="ChEBI" id="CHEBI:29035"/>
        <label>1</label>
    </ligand>
</feature>
<feature type="binding site" evidence="4">
    <location>
        <position position="188"/>
    </location>
    <ligand>
        <name>Mn(2+)</name>
        <dbReference type="ChEBI" id="CHEBI:29035"/>
        <label>2</label>
    </ligand>
</feature>
<feature type="binding site" evidence="4">
    <location>
        <position position="279"/>
    </location>
    <ligand>
        <name>Mn(2+)</name>
        <dbReference type="ChEBI" id="CHEBI:29035"/>
        <label>2</label>
    </ligand>
</feature>
<feature type="modified residue" description="N6-acetyllysine" evidence="1">
    <location>
        <position position="194"/>
    </location>
</feature>
<feature type="modified residue" description="N6-acetyllysine; alternate" evidence="1">
    <location>
        <position position="218"/>
    </location>
</feature>
<feature type="modified residue" description="N6-succinyllysine; alternate" evidence="1">
    <location>
        <position position="218"/>
    </location>
</feature>
<gene>
    <name type="primary">Agmat</name>
    <name evidence="2" type="synonym">Gdah</name>
</gene>